<evidence type="ECO:0000255" key="1">
    <source>
        <dbReference type="HAMAP-Rule" id="MF_00368"/>
    </source>
</evidence>
<evidence type="ECO:0000305" key="2"/>
<organism>
    <name type="scientific">Chara vulgaris</name>
    <name type="common">Common stonewort</name>
    <dbReference type="NCBI Taxonomy" id="55564"/>
    <lineage>
        <taxon>Eukaryota</taxon>
        <taxon>Viridiplantae</taxon>
        <taxon>Streptophyta</taxon>
        <taxon>Charophyceae</taxon>
        <taxon>Charales</taxon>
        <taxon>Characeae</taxon>
        <taxon>Chara</taxon>
    </lineage>
</organism>
<sequence length="135" mass="15136">MEEKEQVDLNQLLNAIKSLTLQEIKIFTDKLQDELGISSDNLYSSRGILTESTSHNKEVEEIDEKTEFDIILEEVPSSSRITVIKVIRSITNSGLKEAKEFIEALPKTVKEGISKEEAESVKAQLEESGAKVTLR</sequence>
<feature type="chain" id="PRO_0000276327" description="Large ribosomal subunit protein bL12c">
    <location>
        <begin position="1"/>
        <end position="135"/>
    </location>
</feature>
<reference key="1">
    <citation type="journal article" date="2006" name="Mol. Biol. Evol.">
        <title>The chloroplast genome sequence of Chara vulgaris sheds new light into the closest green algal relatives of land plants.</title>
        <authorList>
            <person name="Turmel M."/>
            <person name="Otis C."/>
            <person name="Lemieux C."/>
        </authorList>
    </citation>
    <scope>NUCLEOTIDE SEQUENCE [LARGE SCALE GENOMIC DNA]</scope>
</reference>
<proteinExistence type="inferred from homology"/>
<dbReference type="EMBL" id="DQ229107">
    <property type="protein sequence ID" value="ABA61951.1"/>
    <property type="status" value="ALT_INIT"/>
    <property type="molecule type" value="Genomic_DNA"/>
</dbReference>
<dbReference type="RefSeq" id="YP_635778.1">
    <property type="nucleotide sequence ID" value="NC_008097.1"/>
</dbReference>
<dbReference type="SMR" id="Q1ACG9"/>
<dbReference type="GeneID" id="4100317"/>
<dbReference type="GO" id="GO:0009507">
    <property type="term" value="C:chloroplast"/>
    <property type="evidence" value="ECO:0007669"/>
    <property type="project" value="UniProtKB-SubCell"/>
</dbReference>
<dbReference type="GO" id="GO:1990904">
    <property type="term" value="C:ribonucleoprotein complex"/>
    <property type="evidence" value="ECO:0007669"/>
    <property type="project" value="UniProtKB-KW"/>
</dbReference>
<dbReference type="GO" id="GO:0005840">
    <property type="term" value="C:ribosome"/>
    <property type="evidence" value="ECO:0007669"/>
    <property type="project" value="UniProtKB-KW"/>
</dbReference>
<dbReference type="GO" id="GO:0003729">
    <property type="term" value="F:mRNA binding"/>
    <property type="evidence" value="ECO:0007669"/>
    <property type="project" value="TreeGrafter"/>
</dbReference>
<dbReference type="GO" id="GO:0003735">
    <property type="term" value="F:structural constituent of ribosome"/>
    <property type="evidence" value="ECO:0007669"/>
    <property type="project" value="InterPro"/>
</dbReference>
<dbReference type="GO" id="GO:0006412">
    <property type="term" value="P:translation"/>
    <property type="evidence" value="ECO:0007669"/>
    <property type="project" value="UniProtKB-UniRule"/>
</dbReference>
<dbReference type="CDD" id="cd00387">
    <property type="entry name" value="Ribosomal_L7_L12"/>
    <property type="match status" value="1"/>
</dbReference>
<dbReference type="FunFam" id="3.30.1390.10:FF:000001">
    <property type="entry name" value="50S ribosomal protein L7/L12"/>
    <property type="match status" value="1"/>
</dbReference>
<dbReference type="Gene3D" id="3.30.1390.10">
    <property type="match status" value="1"/>
</dbReference>
<dbReference type="HAMAP" id="MF_00368">
    <property type="entry name" value="Ribosomal_bL12"/>
    <property type="match status" value="1"/>
</dbReference>
<dbReference type="InterPro" id="IPR000206">
    <property type="entry name" value="Ribosomal_bL12"/>
</dbReference>
<dbReference type="InterPro" id="IPR013823">
    <property type="entry name" value="Ribosomal_bL12_C"/>
</dbReference>
<dbReference type="InterPro" id="IPR014719">
    <property type="entry name" value="Ribosomal_bL12_C/ClpS-like"/>
</dbReference>
<dbReference type="InterPro" id="IPR036235">
    <property type="entry name" value="Ribosomal_bL12_oligo_N_sf"/>
</dbReference>
<dbReference type="NCBIfam" id="TIGR00855">
    <property type="entry name" value="L12"/>
    <property type="match status" value="1"/>
</dbReference>
<dbReference type="PANTHER" id="PTHR45987">
    <property type="entry name" value="39S RIBOSOMAL PROTEIN L12"/>
    <property type="match status" value="1"/>
</dbReference>
<dbReference type="PANTHER" id="PTHR45987:SF26">
    <property type="entry name" value="LARGE RIBOSOMAL SUBUNIT PROTEIN BL12CX-RELATED"/>
    <property type="match status" value="1"/>
</dbReference>
<dbReference type="Pfam" id="PF00542">
    <property type="entry name" value="Ribosomal_L12"/>
    <property type="match status" value="1"/>
</dbReference>
<dbReference type="SUPFAM" id="SSF54736">
    <property type="entry name" value="ClpS-like"/>
    <property type="match status" value="1"/>
</dbReference>
<dbReference type="SUPFAM" id="SSF48300">
    <property type="entry name" value="Ribosomal protein L7/12, oligomerisation (N-terminal) domain"/>
    <property type="match status" value="1"/>
</dbReference>
<gene>
    <name evidence="1" type="primary">rpl12</name>
</gene>
<comment type="function">
    <text evidence="1">Forms part of the ribosomal stalk which helps the ribosome interact with GTP-bound translation factors. Is thus essential for accurate translation.</text>
</comment>
<comment type="subunit">
    <text evidence="1">Homodimer. Part of the ribosomal stalk of the 50S ribosomal subunit. Forms a multimeric L10(L12)X complex, where L10 forms an elongated spine to which 2 to 4 L12 dimers bind in a sequential fashion. Binds GTP-bound translation factors.</text>
</comment>
<comment type="subcellular location">
    <subcellularLocation>
        <location>Plastid</location>
        <location>Chloroplast</location>
    </subcellularLocation>
</comment>
<comment type="similarity">
    <text evidence="1">Belongs to the bacterial ribosomal protein bL12 family.</text>
</comment>
<comment type="sequence caution" evidence="2">
    <conflict type="erroneous initiation">
        <sequence resource="EMBL-CDS" id="ABA61951"/>
    </conflict>
</comment>
<geneLocation type="chloroplast"/>
<protein>
    <recommendedName>
        <fullName evidence="1">Large ribosomal subunit protein bL12c</fullName>
    </recommendedName>
    <alternativeName>
        <fullName evidence="2">50S ribosomal protein L12, chloroplastic</fullName>
    </alternativeName>
</protein>
<name>RK12_CHAVU</name>
<accession>Q1ACG9</accession>
<keyword id="KW-0150">Chloroplast</keyword>
<keyword id="KW-0934">Plastid</keyword>
<keyword id="KW-0687">Ribonucleoprotein</keyword>
<keyword id="KW-0689">Ribosomal protein</keyword>